<name>HIS5_STRCO</name>
<evidence type="ECO:0000250" key="1"/>
<protein>
    <recommendedName>
        <fullName>Imidazole glycerol phosphate synthase subunit HisH</fullName>
        <ecNumber>4.3.2.10</ecNumber>
    </recommendedName>
    <alternativeName>
        <fullName>IGP synthase glutaminase subunit</fullName>
        <ecNumber>3.5.1.2</ecNumber>
    </alternativeName>
    <alternativeName>
        <fullName>IGP synthase subunit HisH</fullName>
    </alternativeName>
    <alternativeName>
        <fullName>ImGP synthase subunit HisH</fullName>
        <shortName>IGPS subunit HisH</shortName>
    </alternativeName>
</protein>
<accession>P16249</accession>
<dbReference type="EC" id="4.3.2.10"/>
<dbReference type="EC" id="3.5.1.2"/>
<dbReference type="EMBL" id="M31628">
    <property type="protein sequence ID" value="AAA26759.1"/>
    <property type="molecule type" value="Genomic_DNA"/>
</dbReference>
<dbReference type="EMBL" id="AL939111">
    <property type="protein sequence ID" value="CAB51443.1"/>
    <property type="molecule type" value="Genomic_DNA"/>
</dbReference>
<dbReference type="PIR" id="JQ0640">
    <property type="entry name" value="JQ0640"/>
</dbReference>
<dbReference type="RefSeq" id="NP_626311.1">
    <property type="nucleotide sequence ID" value="NC_003888.3"/>
</dbReference>
<dbReference type="RefSeq" id="WP_003976765.1">
    <property type="nucleotide sequence ID" value="NZ_VNID01000001.1"/>
</dbReference>
<dbReference type="SMR" id="P16249"/>
<dbReference type="FunCoup" id="P16249">
    <property type="interactions" value="125"/>
</dbReference>
<dbReference type="STRING" id="100226.gene:17759649"/>
<dbReference type="PaxDb" id="100226-SCO2051"/>
<dbReference type="GeneID" id="91386956"/>
<dbReference type="KEGG" id="sco:SCO2051"/>
<dbReference type="PATRIC" id="fig|100226.15.peg.2082"/>
<dbReference type="eggNOG" id="COG0118">
    <property type="taxonomic scope" value="Bacteria"/>
</dbReference>
<dbReference type="HOGENOM" id="CLU_071837_1_0_11"/>
<dbReference type="InParanoid" id="P16249"/>
<dbReference type="OrthoDB" id="9807137at2"/>
<dbReference type="PhylomeDB" id="P16249"/>
<dbReference type="UniPathway" id="UPA00031">
    <property type="reaction ID" value="UER00010"/>
</dbReference>
<dbReference type="Proteomes" id="UP000001973">
    <property type="component" value="Chromosome"/>
</dbReference>
<dbReference type="GO" id="GO:0005737">
    <property type="term" value="C:cytoplasm"/>
    <property type="evidence" value="ECO:0007669"/>
    <property type="project" value="UniProtKB-SubCell"/>
</dbReference>
<dbReference type="GO" id="GO:0004359">
    <property type="term" value="F:glutaminase activity"/>
    <property type="evidence" value="ECO:0007669"/>
    <property type="project" value="UniProtKB-EC"/>
</dbReference>
<dbReference type="GO" id="GO:0000107">
    <property type="term" value="F:imidazoleglycerol-phosphate synthase activity"/>
    <property type="evidence" value="ECO:0000318"/>
    <property type="project" value="GO_Central"/>
</dbReference>
<dbReference type="GO" id="GO:0016829">
    <property type="term" value="F:lyase activity"/>
    <property type="evidence" value="ECO:0007669"/>
    <property type="project" value="UniProtKB-KW"/>
</dbReference>
<dbReference type="GO" id="GO:0000105">
    <property type="term" value="P:L-histidine biosynthetic process"/>
    <property type="evidence" value="ECO:0007669"/>
    <property type="project" value="UniProtKB-UniRule"/>
</dbReference>
<dbReference type="CDD" id="cd01748">
    <property type="entry name" value="GATase1_IGP_Synthase"/>
    <property type="match status" value="1"/>
</dbReference>
<dbReference type="FunFam" id="3.40.50.880:FF:000056">
    <property type="entry name" value="Imidazole glycerol phosphate synthase subunit HisH"/>
    <property type="match status" value="1"/>
</dbReference>
<dbReference type="Gene3D" id="3.40.50.880">
    <property type="match status" value="1"/>
</dbReference>
<dbReference type="HAMAP" id="MF_00278">
    <property type="entry name" value="HisH"/>
    <property type="match status" value="1"/>
</dbReference>
<dbReference type="InterPro" id="IPR029062">
    <property type="entry name" value="Class_I_gatase-like"/>
</dbReference>
<dbReference type="InterPro" id="IPR017926">
    <property type="entry name" value="GATASE"/>
</dbReference>
<dbReference type="InterPro" id="IPR010139">
    <property type="entry name" value="Imidazole-glycPsynth_HisH"/>
</dbReference>
<dbReference type="NCBIfam" id="TIGR01855">
    <property type="entry name" value="IMP_synth_hisH"/>
    <property type="match status" value="1"/>
</dbReference>
<dbReference type="PANTHER" id="PTHR42701">
    <property type="entry name" value="IMIDAZOLE GLYCEROL PHOSPHATE SYNTHASE SUBUNIT HISH"/>
    <property type="match status" value="1"/>
</dbReference>
<dbReference type="PANTHER" id="PTHR42701:SF1">
    <property type="entry name" value="IMIDAZOLE GLYCEROL PHOSPHATE SYNTHASE SUBUNIT HISH"/>
    <property type="match status" value="1"/>
</dbReference>
<dbReference type="Pfam" id="PF00117">
    <property type="entry name" value="GATase"/>
    <property type="match status" value="1"/>
</dbReference>
<dbReference type="PIRSF" id="PIRSF000495">
    <property type="entry name" value="Amidotransf_hisH"/>
    <property type="match status" value="1"/>
</dbReference>
<dbReference type="SUPFAM" id="SSF52317">
    <property type="entry name" value="Class I glutamine amidotransferase-like"/>
    <property type="match status" value="1"/>
</dbReference>
<dbReference type="PROSITE" id="PS51273">
    <property type="entry name" value="GATASE_TYPE_1"/>
    <property type="match status" value="1"/>
</dbReference>
<gene>
    <name type="primary">hisH</name>
    <name type="ordered locus">SCO2051</name>
    <name type="ORF">SC4G6.20c</name>
</gene>
<feature type="chain" id="PRO_0000152431" description="Imidazole glycerol phosphate synthase subunit HisH">
    <location>
        <begin position="1"/>
        <end position="222"/>
    </location>
</feature>
<feature type="domain" description="Glutamine amidotransferase type-1">
    <location>
        <begin position="15"/>
        <end position="222"/>
    </location>
</feature>
<feature type="active site" description="Nucleophile" evidence="1">
    <location>
        <position position="93"/>
    </location>
</feature>
<feature type="active site" evidence="1">
    <location>
        <position position="203"/>
    </location>
</feature>
<feature type="active site" evidence="1">
    <location>
        <position position="205"/>
    </location>
</feature>
<sequence length="222" mass="23861">MTAAVPAGATGRAKKVVVFDYGFGNVRSAERALARAGADVEITRDYDKAMNADGLLVPGVGAFAACMEGLKAARGDWIVDRRLSGGRPVMGICVGMQILFSRGIEHDVEAEGLDEWPGTVGPLEADVVPHMGWNTVEAPADSQLFAGLDADARFYFVHSYAVHEWTQESHNPLIAEPRVTWSTHGKPFVAAVENGALWATQFHPEKSGDAGAQLLTNWIETL</sequence>
<reference key="1">
    <citation type="journal article" date="1990" name="Gene">
        <title>Cloning and characterization of the histidine biosynthetic gene cluster of Streptomyces coelicolor A3(2).</title>
        <authorList>
            <person name="Limauro D."/>
            <person name="Avitabile A."/>
            <person name="Cappellano M."/>
            <person name="Puglia A.M."/>
            <person name="Bruni C.B."/>
        </authorList>
    </citation>
    <scope>NUCLEOTIDE SEQUENCE [GENOMIC DNA]</scope>
    <source>
        <strain>A3(2) / NRRL B-16638</strain>
    </source>
</reference>
<reference key="2">
    <citation type="journal article" date="2002" name="Nature">
        <title>Complete genome sequence of the model actinomycete Streptomyces coelicolor A3(2).</title>
        <authorList>
            <person name="Bentley S.D."/>
            <person name="Chater K.F."/>
            <person name="Cerdeno-Tarraga A.-M."/>
            <person name="Challis G.L."/>
            <person name="Thomson N.R."/>
            <person name="James K.D."/>
            <person name="Harris D.E."/>
            <person name="Quail M.A."/>
            <person name="Kieser H."/>
            <person name="Harper D."/>
            <person name="Bateman A."/>
            <person name="Brown S."/>
            <person name="Chandra G."/>
            <person name="Chen C.W."/>
            <person name="Collins M."/>
            <person name="Cronin A."/>
            <person name="Fraser A."/>
            <person name="Goble A."/>
            <person name="Hidalgo J."/>
            <person name="Hornsby T."/>
            <person name="Howarth S."/>
            <person name="Huang C.-H."/>
            <person name="Kieser T."/>
            <person name="Larke L."/>
            <person name="Murphy L.D."/>
            <person name="Oliver K."/>
            <person name="O'Neil S."/>
            <person name="Rabbinowitsch E."/>
            <person name="Rajandream M.A."/>
            <person name="Rutherford K.M."/>
            <person name="Rutter S."/>
            <person name="Seeger K."/>
            <person name="Saunders D."/>
            <person name="Sharp S."/>
            <person name="Squares R."/>
            <person name="Squares S."/>
            <person name="Taylor K."/>
            <person name="Warren T."/>
            <person name="Wietzorrek A."/>
            <person name="Woodward J.R."/>
            <person name="Barrell B.G."/>
            <person name="Parkhill J."/>
            <person name="Hopwood D.A."/>
        </authorList>
    </citation>
    <scope>NUCLEOTIDE SEQUENCE [LARGE SCALE GENOMIC DNA]</scope>
    <source>
        <strain>ATCC BAA-471 / A3(2) / M145</strain>
    </source>
</reference>
<keyword id="KW-0028">Amino-acid biosynthesis</keyword>
<keyword id="KW-0963">Cytoplasm</keyword>
<keyword id="KW-0315">Glutamine amidotransferase</keyword>
<keyword id="KW-0368">Histidine biosynthesis</keyword>
<keyword id="KW-0378">Hydrolase</keyword>
<keyword id="KW-0456">Lyase</keyword>
<keyword id="KW-1185">Reference proteome</keyword>
<comment type="function">
    <text evidence="1">IGPS catalyzes the conversion of PRFAR and glutamine to IGP, AICAR and glutamate. The HisH subunit catalyzes the hydrolysis of glutamine to glutamate and ammonia as part of the synthesis of IGP and AICAR. The resulting ammonia molecule is channeled to the active site of HisF (By similarity).</text>
</comment>
<comment type="catalytic activity">
    <reaction>
        <text>5-[(5-phospho-1-deoxy-D-ribulos-1-ylimino)methylamino]-1-(5-phospho-beta-D-ribosyl)imidazole-4-carboxamide + L-glutamine = D-erythro-1-(imidazol-4-yl)glycerol 3-phosphate + 5-amino-1-(5-phospho-beta-D-ribosyl)imidazole-4-carboxamide + L-glutamate + H(+)</text>
        <dbReference type="Rhea" id="RHEA:24793"/>
        <dbReference type="ChEBI" id="CHEBI:15378"/>
        <dbReference type="ChEBI" id="CHEBI:29985"/>
        <dbReference type="ChEBI" id="CHEBI:58278"/>
        <dbReference type="ChEBI" id="CHEBI:58359"/>
        <dbReference type="ChEBI" id="CHEBI:58475"/>
        <dbReference type="ChEBI" id="CHEBI:58525"/>
        <dbReference type="EC" id="4.3.2.10"/>
    </reaction>
</comment>
<comment type="catalytic activity">
    <reaction>
        <text>L-glutamine + H2O = L-glutamate + NH4(+)</text>
        <dbReference type="Rhea" id="RHEA:15889"/>
        <dbReference type="ChEBI" id="CHEBI:15377"/>
        <dbReference type="ChEBI" id="CHEBI:28938"/>
        <dbReference type="ChEBI" id="CHEBI:29985"/>
        <dbReference type="ChEBI" id="CHEBI:58359"/>
        <dbReference type="EC" id="3.5.1.2"/>
    </reaction>
</comment>
<comment type="pathway">
    <text>Amino-acid biosynthesis; L-histidine biosynthesis; L-histidine from 5-phospho-alpha-D-ribose 1-diphosphate: step 5/9.</text>
</comment>
<comment type="subunit">
    <text evidence="1">Heterodimer of HisH and HisF.</text>
</comment>
<comment type="subcellular location">
    <subcellularLocation>
        <location evidence="1">Cytoplasm</location>
    </subcellularLocation>
</comment>
<organism>
    <name type="scientific">Streptomyces coelicolor (strain ATCC BAA-471 / A3(2) / M145)</name>
    <dbReference type="NCBI Taxonomy" id="100226"/>
    <lineage>
        <taxon>Bacteria</taxon>
        <taxon>Bacillati</taxon>
        <taxon>Actinomycetota</taxon>
        <taxon>Actinomycetes</taxon>
        <taxon>Kitasatosporales</taxon>
        <taxon>Streptomycetaceae</taxon>
        <taxon>Streptomyces</taxon>
        <taxon>Streptomyces albidoflavus group</taxon>
    </lineage>
</organism>
<proteinExistence type="inferred from homology"/>